<keyword id="KW-0012">Acyltransferase</keyword>
<keyword id="KW-0046">Antibiotic resistance</keyword>
<keyword id="KW-0067">ATP-binding</keyword>
<keyword id="KW-0963">Cytoplasm</keyword>
<keyword id="KW-0418">Kinase</keyword>
<keyword id="KW-0511">Multifunctional enzyme</keyword>
<keyword id="KW-0547">Nucleotide-binding</keyword>
<keyword id="KW-0808">Transferase</keyword>
<dbReference type="EC" id="2.3.1.-"/>
<dbReference type="EC" id="2.7.1.190" evidence="2"/>
<dbReference type="EMBL" id="AP006716">
    <property type="protein sequence ID" value="BAE04920.1"/>
    <property type="molecule type" value="Genomic_DNA"/>
</dbReference>
<dbReference type="SMR" id="Q4L605"/>
<dbReference type="KEGG" id="sha:SH1611"/>
<dbReference type="eggNOG" id="COG1670">
    <property type="taxonomic scope" value="Bacteria"/>
</dbReference>
<dbReference type="eggNOG" id="COG3173">
    <property type="taxonomic scope" value="Bacteria"/>
</dbReference>
<dbReference type="HOGENOM" id="CLU_632450_0_0_9"/>
<dbReference type="OrthoDB" id="9795206at2"/>
<dbReference type="Proteomes" id="UP000000543">
    <property type="component" value="Chromosome"/>
</dbReference>
<dbReference type="GO" id="GO:0005737">
    <property type="term" value="C:cytoplasm"/>
    <property type="evidence" value="ECO:0007669"/>
    <property type="project" value="UniProtKB-SubCell"/>
</dbReference>
<dbReference type="GO" id="GO:0034071">
    <property type="term" value="F:aminoglycoside phosphotransferase activity"/>
    <property type="evidence" value="ECO:0007669"/>
    <property type="project" value="UniProtKB-EC"/>
</dbReference>
<dbReference type="GO" id="GO:0005524">
    <property type="term" value="F:ATP binding"/>
    <property type="evidence" value="ECO:0007669"/>
    <property type="project" value="UniProtKB-KW"/>
</dbReference>
<dbReference type="GO" id="GO:0016410">
    <property type="term" value="F:N-acyltransferase activity"/>
    <property type="evidence" value="ECO:0007669"/>
    <property type="project" value="TreeGrafter"/>
</dbReference>
<dbReference type="GO" id="GO:0046677">
    <property type="term" value="P:response to antibiotic"/>
    <property type="evidence" value="ECO:0007669"/>
    <property type="project" value="UniProtKB-KW"/>
</dbReference>
<dbReference type="CDD" id="cd05120">
    <property type="entry name" value="APH_ChoK_like"/>
    <property type="match status" value="1"/>
</dbReference>
<dbReference type="Gene3D" id="3.40.630.30">
    <property type="match status" value="1"/>
</dbReference>
<dbReference type="Gene3D" id="3.90.1200.10">
    <property type="match status" value="1"/>
</dbReference>
<dbReference type="Gene3D" id="3.30.200.20">
    <property type="entry name" value="Phosphorylase Kinase, domain 1"/>
    <property type="match status" value="1"/>
</dbReference>
<dbReference type="InterPro" id="IPR016181">
    <property type="entry name" value="Acyl_CoA_acyltransferase"/>
</dbReference>
<dbReference type="InterPro" id="IPR002575">
    <property type="entry name" value="Aminoglycoside_PTrfase"/>
</dbReference>
<dbReference type="InterPro" id="IPR000182">
    <property type="entry name" value="GNAT_dom"/>
</dbReference>
<dbReference type="InterPro" id="IPR011009">
    <property type="entry name" value="Kinase-like_dom_sf"/>
</dbReference>
<dbReference type="NCBIfam" id="NF000507">
    <property type="entry name" value="AAC_6p_Ie"/>
    <property type="match status" value="1"/>
</dbReference>
<dbReference type="NCBIfam" id="NF033693">
    <property type="entry name" value="AAC_6p_Ie_fam"/>
    <property type="match status" value="1"/>
</dbReference>
<dbReference type="NCBIfam" id="NF033692">
    <property type="entry name" value="APH_2pp_I_a_f_h"/>
    <property type="match status" value="1"/>
</dbReference>
<dbReference type="NCBIfam" id="NF000508">
    <property type="entry name" value="APH_2pp_Ia"/>
    <property type="match status" value="1"/>
</dbReference>
<dbReference type="PANTHER" id="PTHR31438">
    <property type="entry name" value="LYSINE N-ACYLTRANSFERASE C17G9.06C-RELATED"/>
    <property type="match status" value="1"/>
</dbReference>
<dbReference type="PANTHER" id="PTHR31438:SF1">
    <property type="entry name" value="LYSINE N-ACYLTRANSFERASE C17G9.06C-RELATED"/>
    <property type="match status" value="1"/>
</dbReference>
<dbReference type="Pfam" id="PF13523">
    <property type="entry name" value="Acetyltransf_8"/>
    <property type="match status" value="1"/>
</dbReference>
<dbReference type="Pfam" id="PF01636">
    <property type="entry name" value="APH"/>
    <property type="match status" value="1"/>
</dbReference>
<dbReference type="SUPFAM" id="SSF55729">
    <property type="entry name" value="Acyl-CoA N-acyltransferases (Nat)"/>
    <property type="match status" value="1"/>
</dbReference>
<dbReference type="SUPFAM" id="SSF56112">
    <property type="entry name" value="Protein kinase-like (PK-like)"/>
    <property type="match status" value="1"/>
</dbReference>
<dbReference type="PROSITE" id="PS51186">
    <property type="entry name" value="GNAT"/>
    <property type="match status" value="1"/>
</dbReference>
<proteinExistence type="inferred from homology"/>
<name>AACA_STAHJ</name>
<organism>
    <name type="scientific">Staphylococcus haemolyticus (strain JCSC1435)</name>
    <dbReference type="NCBI Taxonomy" id="279808"/>
    <lineage>
        <taxon>Bacteria</taxon>
        <taxon>Bacillati</taxon>
        <taxon>Bacillota</taxon>
        <taxon>Bacilli</taxon>
        <taxon>Bacillales</taxon>
        <taxon>Staphylococcaceae</taxon>
        <taxon>Staphylococcus</taxon>
    </lineage>
</organism>
<comment type="function">
    <text evidence="2">Involved in resistance to gentamicin, tobramycin, and kanamycin. Tobramycin and kanamycin resistance is due to the ACC activity, specified by N-terminal region. The C-terminal region is a kinase that phosphorylates several 4,6-disubstituted aminoglycosides.</text>
</comment>
<comment type="catalytic activity">
    <reaction evidence="2">
        <text>a gentamycin + GTP = a gentamycin 2''-phosphate + GDP + H(+)</text>
        <dbReference type="Rhea" id="RHEA:48872"/>
        <dbReference type="ChEBI" id="CHEBI:15378"/>
        <dbReference type="ChEBI" id="CHEBI:37565"/>
        <dbReference type="ChEBI" id="CHEBI:58189"/>
        <dbReference type="ChEBI" id="CHEBI:90218"/>
        <dbReference type="ChEBI" id="CHEBI:90219"/>
        <dbReference type="EC" id="2.7.1.190"/>
    </reaction>
</comment>
<comment type="subcellular location">
    <subcellularLocation>
        <location evidence="1">Cytoplasm</location>
    </subcellularLocation>
</comment>
<comment type="similarity">
    <text evidence="4">In the C-terminal section; belongs to the aminoglycoside phosphotransferase family.</text>
</comment>
<reference key="1">
    <citation type="journal article" date="2005" name="J. Bacteriol.">
        <title>Whole-genome sequencing of Staphylococcus haemolyticus uncovers the extreme plasticity of its genome and the evolution of human-colonizing staphylococcal species.</title>
        <authorList>
            <person name="Takeuchi F."/>
            <person name="Watanabe S."/>
            <person name="Baba T."/>
            <person name="Yuzawa H."/>
            <person name="Ito T."/>
            <person name="Morimoto Y."/>
            <person name="Kuroda M."/>
            <person name="Cui L."/>
            <person name="Takahashi M."/>
            <person name="Ankai A."/>
            <person name="Baba S."/>
            <person name="Fukui S."/>
            <person name="Lee J.C."/>
            <person name="Hiramatsu K."/>
        </authorList>
    </citation>
    <scope>NUCLEOTIDE SEQUENCE [LARGE SCALE GENOMIC DNA]</scope>
    <source>
        <strain>JCSC1435</strain>
    </source>
</reference>
<evidence type="ECO:0000250" key="1"/>
<evidence type="ECO:0000250" key="2">
    <source>
        <dbReference type="UniProtKB" id="P0A0C2"/>
    </source>
</evidence>
<evidence type="ECO:0000255" key="3">
    <source>
        <dbReference type="PROSITE-ProRule" id="PRU00532"/>
    </source>
</evidence>
<evidence type="ECO:0000305" key="4"/>
<gene>
    <name type="primary">aacA-aphD</name>
    <name type="ordered locus">SH1611</name>
</gene>
<accession>Q4L605</accession>
<protein>
    <recommendedName>
        <fullName>Bifunctional AAC/APH</fullName>
    </recommendedName>
    <domain>
        <recommendedName>
            <fullName>6'-aminoglycoside N-acetyltransferase</fullName>
            <ecNumber>2.3.1.-</ecNumber>
        </recommendedName>
        <alternativeName>
            <fullName>AAC(6')</fullName>
        </alternativeName>
    </domain>
    <domain>
        <recommendedName>
            <fullName>Aminoglycoside 2''-phosphotransferase</fullName>
        </recommendedName>
        <alternativeName>
            <fullName>2''-aminoglycoside phosphotransferase</fullName>
            <ecNumber evidence="2">2.7.1.190</ecNumber>
        </alternativeName>
        <alternativeName>
            <fullName>APH(2'')</fullName>
        </alternativeName>
    </domain>
</protein>
<feature type="chain" id="PRO_0000223383" description="Bifunctional AAC/APH">
    <location>
        <begin position="1"/>
        <end position="479"/>
    </location>
</feature>
<feature type="domain" description="N-acetyltransferase" evidence="3">
    <location>
        <begin position="8"/>
        <end position="180"/>
    </location>
</feature>
<feature type="region of interest" description="Acetyl-CoA binding site" evidence="1">
    <location>
        <begin position="110"/>
        <end position="153"/>
    </location>
</feature>
<feature type="active site" description="Proton acceptor; for phosphotransferase activity" evidence="1">
    <location>
        <position position="374"/>
    </location>
</feature>
<feature type="binding site" evidence="1">
    <location>
        <position position="393"/>
    </location>
    <ligand>
        <name>a gentamycin</name>
        <dbReference type="ChEBI" id="CHEBI:90218"/>
    </ligand>
</feature>
<sequence length="479" mass="56855">MNIVENEICIRTLIDDDFPLMLKWLTDERVLEFYGGRDKKYTLESLKKHYTEPWEDEVFRVIIEYNNVPIGYGQIYKMYDELYTDYHYPKTDEIVYGMDQFIGEPNYWSKGIGTRYIKLIFEFLKKERNANAVILDPHKNNPRAIRAYQKSGFRIIEDLPEHELHEGKKEDCYLMEYRYDDNATNVKAMKYLIEHYFDNFKVDSIEIIGSGYDSVAYLVNNEYIFKTKFSTNKKKGYAKEKAIYNFLNTNLETNVKIPNIEYSYISDELSILGYKEIKGTFLTPEIYSTMSEEEQNLLKRDIASFLRQMHGLDYTDISECTIDNKQNVLEEYILLRETIYNDLTDIEKDYIESFMERLNATTVFEGKKCLCHNDFSCNHLLLDGNNRLTGIIDFGDSGIIDEYCDFIYLLEDSEEEIGTNFGEDILRMYGNIDIEKAKEYQDIVEEYYPIETIVYGIKNIKQEFIENGRKEIYKRTYKD</sequence>